<organism>
    <name type="scientific">Lactobacillus gasseri (strain ATCC 33323 / DSM 20243 / BCRC 14619 / CIP 102991 / JCM 1131 / KCTC 3163 / NCIMB 11718 / NCTC 13722 / AM63)</name>
    <dbReference type="NCBI Taxonomy" id="324831"/>
    <lineage>
        <taxon>Bacteria</taxon>
        <taxon>Bacillati</taxon>
        <taxon>Bacillota</taxon>
        <taxon>Bacilli</taxon>
        <taxon>Lactobacillales</taxon>
        <taxon>Lactobacillaceae</taxon>
        <taxon>Lactobacillus</taxon>
    </lineage>
</organism>
<protein>
    <recommendedName>
        <fullName evidence="1">Proline--tRNA ligase</fullName>
        <ecNumber evidence="1">6.1.1.15</ecNumber>
    </recommendedName>
    <alternativeName>
        <fullName evidence="1">Prolyl-tRNA synthetase</fullName>
        <shortName evidence="1">ProRS</shortName>
    </alternativeName>
</protein>
<comment type="function">
    <text evidence="1">Catalyzes the attachment of proline to tRNA(Pro) in a two-step reaction: proline is first activated by ATP to form Pro-AMP and then transferred to the acceptor end of tRNA(Pro). As ProRS can inadvertently accommodate and process non-cognate amino acids such as alanine and cysteine, to avoid such errors it has two additional distinct editing activities against alanine. One activity is designated as 'pretransfer' editing and involves the tRNA(Pro)-independent hydrolysis of activated Ala-AMP. The other activity is designated 'posttransfer' editing and involves deacylation of mischarged Ala-tRNA(Pro). The misacylated Cys-tRNA(Pro) is not edited by ProRS.</text>
</comment>
<comment type="catalytic activity">
    <reaction evidence="1">
        <text>tRNA(Pro) + L-proline + ATP = L-prolyl-tRNA(Pro) + AMP + diphosphate</text>
        <dbReference type="Rhea" id="RHEA:14305"/>
        <dbReference type="Rhea" id="RHEA-COMP:9700"/>
        <dbReference type="Rhea" id="RHEA-COMP:9702"/>
        <dbReference type="ChEBI" id="CHEBI:30616"/>
        <dbReference type="ChEBI" id="CHEBI:33019"/>
        <dbReference type="ChEBI" id="CHEBI:60039"/>
        <dbReference type="ChEBI" id="CHEBI:78442"/>
        <dbReference type="ChEBI" id="CHEBI:78532"/>
        <dbReference type="ChEBI" id="CHEBI:456215"/>
        <dbReference type="EC" id="6.1.1.15"/>
    </reaction>
</comment>
<comment type="subunit">
    <text evidence="1">Homodimer.</text>
</comment>
<comment type="subcellular location">
    <subcellularLocation>
        <location evidence="1">Cytoplasm</location>
    </subcellularLocation>
</comment>
<comment type="domain">
    <text evidence="1">Consists of three domains: the N-terminal catalytic domain, the editing domain and the C-terminal anticodon-binding domain.</text>
</comment>
<comment type="similarity">
    <text evidence="1">Belongs to the class-II aminoacyl-tRNA synthetase family. ProS type 1 subfamily.</text>
</comment>
<accession>Q044C3</accession>
<keyword id="KW-0030">Aminoacyl-tRNA synthetase</keyword>
<keyword id="KW-0067">ATP-binding</keyword>
<keyword id="KW-0963">Cytoplasm</keyword>
<keyword id="KW-0436">Ligase</keyword>
<keyword id="KW-0547">Nucleotide-binding</keyword>
<keyword id="KW-0648">Protein biosynthesis</keyword>
<gene>
    <name evidence="1" type="primary">proS</name>
    <name type="ordered locus">LGAS_0808</name>
</gene>
<reference key="1">
    <citation type="journal article" date="2006" name="Proc. Natl. Acad. Sci. U.S.A.">
        <title>Comparative genomics of the lactic acid bacteria.</title>
        <authorList>
            <person name="Makarova K.S."/>
            <person name="Slesarev A."/>
            <person name="Wolf Y.I."/>
            <person name="Sorokin A."/>
            <person name="Mirkin B."/>
            <person name="Koonin E.V."/>
            <person name="Pavlov A."/>
            <person name="Pavlova N."/>
            <person name="Karamychev V."/>
            <person name="Polouchine N."/>
            <person name="Shakhova V."/>
            <person name="Grigoriev I."/>
            <person name="Lou Y."/>
            <person name="Rohksar D."/>
            <person name="Lucas S."/>
            <person name="Huang K."/>
            <person name="Goodstein D.M."/>
            <person name="Hawkins T."/>
            <person name="Plengvidhya V."/>
            <person name="Welker D."/>
            <person name="Hughes J."/>
            <person name="Goh Y."/>
            <person name="Benson A."/>
            <person name="Baldwin K."/>
            <person name="Lee J.-H."/>
            <person name="Diaz-Muniz I."/>
            <person name="Dosti B."/>
            <person name="Smeianov V."/>
            <person name="Wechter W."/>
            <person name="Barabote R."/>
            <person name="Lorca G."/>
            <person name="Altermann E."/>
            <person name="Barrangou R."/>
            <person name="Ganesan B."/>
            <person name="Xie Y."/>
            <person name="Rawsthorne H."/>
            <person name="Tamir D."/>
            <person name="Parker C."/>
            <person name="Breidt F."/>
            <person name="Broadbent J.R."/>
            <person name="Hutkins R."/>
            <person name="O'Sullivan D."/>
            <person name="Steele J."/>
            <person name="Unlu G."/>
            <person name="Saier M.H. Jr."/>
            <person name="Klaenhammer T."/>
            <person name="Richardson P."/>
            <person name="Kozyavkin S."/>
            <person name="Weimer B.C."/>
            <person name="Mills D.A."/>
        </authorList>
    </citation>
    <scope>NUCLEOTIDE SEQUENCE [LARGE SCALE GENOMIC DNA]</scope>
    <source>
        <strain>ATCC 33323 / DSM 20243 / BCRC 14619 / CIP 102991 / JCM 1131 / KCTC 3163 / NCIMB 11718 / NCTC 13722 / AM63</strain>
    </source>
</reference>
<name>SYP_LACGA</name>
<evidence type="ECO:0000255" key="1">
    <source>
        <dbReference type="HAMAP-Rule" id="MF_01569"/>
    </source>
</evidence>
<proteinExistence type="inferred from homology"/>
<dbReference type="EC" id="6.1.1.15" evidence="1"/>
<dbReference type="EMBL" id="CP000413">
    <property type="protein sequence ID" value="ABJ60199.1"/>
    <property type="molecule type" value="Genomic_DNA"/>
</dbReference>
<dbReference type="RefSeq" id="WP_003647483.1">
    <property type="nucleotide sequence ID" value="NZ_WBMG01000005.1"/>
</dbReference>
<dbReference type="SMR" id="Q044C3"/>
<dbReference type="GeneID" id="29639470"/>
<dbReference type="KEGG" id="lga:LGAS_0808"/>
<dbReference type="HOGENOM" id="CLU_016739_0_0_9"/>
<dbReference type="BioCyc" id="LGAS324831:G1G6Y-802-MONOMER"/>
<dbReference type="Proteomes" id="UP000000664">
    <property type="component" value="Chromosome"/>
</dbReference>
<dbReference type="GO" id="GO:0005829">
    <property type="term" value="C:cytosol"/>
    <property type="evidence" value="ECO:0007669"/>
    <property type="project" value="TreeGrafter"/>
</dbReference>
<dbReference type="GO" id="GO:0002161">
    <property type="term" value="F:aminoacyl-tRNA deacylase activity"/>
    <property type="evidence" value="ECO:0007669"/>
    <property type="project" value="InterPro"/>
</dbReference>
<dbReference type="GO" id="GO:0005524">
    <property type="term" value="F:ATP binding"/>
    <property type="evidence" value="ECO:0007669"/>
    <property type="project" value="UniProtKB-UniRule"/>
</dbReference>
<dbReference type="GO" id="GO:0140096">
    <property type="term" value="F:catalytic activity, acting on a protein"/>
    <property type="evidence" value="ECO:0007669"/>
    <property type="project" value="UniProtKB-ARBA"/>
</dbReference>
<dbReference type="GO" id="GO:0004827">
    <property type="term" value="F:proline-tRNA ligase activity"/>
    <property type="evidence" value="ECO:0007669"/>
    <property type="project" value="UniProtKB-UniRule"/>
</dbReference>
<dbReference type="GO" id="GO:0016740">
    <property type="term" value="F:transferase activity"/>
    <property type="evidence" value="ECO:0007669"/>
    <property type="project" value="UniProtKB-ARBA"/>
</dbReference>
<dbReference type="GO" id="GO:0006433">
    <property type="term" value="P:prolyl-tRNA aminoacylation"/>
    <property type="evidence" value="ECO:0007669"/>
    <property type="project" value="UniProtKB-UniRule"/>
</dbReference>
<dbReference type="CDD" id="cd04334">
    <property type="entry name" value="ProRS-INS"/>
    <property type="match status" value="1"/>
</dbReference>
<dbReference type="CDD" id="cd00861">
    <property type="entry name" value="ProRS_anticodon_short"/>
    <property type="match status" value="1"/>
</dbReference>
<dbReference type="CDD" id="cd00779">
    <property type="entry name" value="ProRS_core_prok"/>
    <property type="match status" value="1"/>
</dbReference>
<dbReference type="FunFam" id="3.40.50.800:FF:000011">
    <property type="entry name" value="Proline--tRNA ligase"/>
    <property type="match status" value="1"/>
</dbReference>
<dbReference type="Gene3D" id="3.40.50.800">
    <property type="entry name" value="Anticodon-binding domain"/>
    <property type="match status" value="1"/>
</dbReference>
<dbReference type="Gene3D" id="3.30.930.10">
    <property type="entry name" value="Bira Bifunctional Protein, Domain 2"/>
    <property type="match status" value="2"/>
</dbReference>
<dbReference type="Gene3D" id="3.90.960.10">
    <property type="entry name" value="YbaK/aminoacyl-tRNA synthetase-associated domain"/>
    <property type="match status" value="1"/>
</dbReference>
<dbReference type="HAMAP" id="MF_01569">
    <property type="entry name" value="Pro_tRNA_synth_type1"/>
    <property type="match status" value="1"/>
</dbReference>
<dbReference type="InterPro" id="IPR002314">
    <property type="entry name" value="aa-tRNA-synt_IIb"/>
</dbReference>
<dbReference type="InterPro" id="IPR006195">
    <property type="entry name" value="aa-tRNA-synth_II"/>
</dbReference>
<dbReference type="InterPro" id="IPR045864">
    <property type="entry name" value="aa-tRNA-synth_II/BPL/LPL"/>
</dbReference>
<dbReference type="InterPro" id="IPR004154">
    <property type="entry name" value="Anticodon-bd"/>
</dbReference>
<dbReference type="InterPro" id="IPR036621">
    <property type="entry name" value="Anticodon-bd_dom_sf"/>
</dbReference>
<dbReference type="InterPro" id="IPR002316">
    <property type="entry name" value="Pro-tRNA-ligase_IIa"/>
</dbReference>
<dbReference type="InterPro" id="IPR004500">
    <property type="entry name" value="Pro-tRNA-synth_IIa_bac-type"/>
</dbReference>
<dbReference type="InterPro" id="IPR023717">
    <property type="entry name" value="Pro-tRNA-Synthase_IIa_type1"/>
</dbReference>
<dbReference type="InterPro" id="IPR050062">
    <property type="entry name" value="Pro-tRNA_synthetase"/>
</dbReference>
<dbReference type="InterPro" id="IPR044140">
    <property type="entry name" value="ProRS_anticodon_short"/>
</dbReference>
<dbReference type="InterPro" id="IPR033730">
    <property type="entry name" value="ProRS_core_prok"/>
</dbReference>
<dbReference type="InterPro" id="IPR036754">
    <property type="entry name" value="YbaK/aa-tRNA-synt-asso_dom_sf"/>
</dbReference>
<dbReference type="InterPro" id="IPR007214">
    <property type="entry name" value="YbaK/aa-tRNA-synth-assoc-dom"/>
</dbReference>
<dbReference type="NCBIfam" id="NF006625">
    <property type="entry name" value="PRK09194.1"/>
    <property type="match status" value="1"/>
</dbReference>
<dbReference type="NCBIfam" id="TIGR00409">
    <property type="entry name" value="proS_fam_II"/>
    <property type="match status" value="1"/>
</dbReference>
<dbReference type="PANTHER" id="PTHR42753">
    <property type="entry name" value="MITOCHONDRIAL RIBOSOME PROTEIN L39/PROLYL-TRNA LIGASE FAMILY MEMBER"/>
    <property type="match status" value="1"/>
</dbReference>
<dbReference type="PANTHER" id="PTHR42753:SF2">
    <property type="entry name" value="PROLINE--TRNA LIGASE"/>
    <property type="match status" value="1"/>
</dbReference>
<dbReference type="Pfam" id="PF03129">
    <property type="entry name" value="HGTP_anticodon"/>
    <property type="match status" value="1"/>
</dbReference>
<dbReference type="Pfam" id="PF00587">
    <property type="entry name" value="tRNA-synt_2b"/>
    <property type="match status" value="1"/>
</dbReference>
<dbReference type="Pfam" id="PF04073">
    <property type="entry name" value="tRNA_edit"/>
    <property type="match status" value="1"/>
</dbReference>
<dbReference type="PRINTS" id="PR01046">
    <property type="entry name" value="TRNASYNTHPRO"/>
</dbReference>
<dbReference type="SUPFAM" id="SSF52954">
    <property type="entry name" value="Class II aaRS ABD-related"/>
    <property type="match status" value="1"/>
</dbReference>
<dbReference type="SUPFAM" id="SSF55681">
    <property type="entry name" value="Class II aaRS and biotin synthetases"/>
    <property type="match status" value="1"/>
</dbReference>
<dbReference type="SUPFAM" id="SSF55826">
    <property type="entry name" value="YbaK/ProRS associated domain"/>
    <property type="match status" value="1"/>
</dbReference>
<dbReference type="PROSITE" id="PS50862">
    <property type="entry name" value="AA_TRNA_LIGASE_II"/>
    <property type="match status" value="1"/>
</dbReference>
<feature type="chain" id="PRO_0000288338" description="Proline--tRNA ligase">
    <location>
        <begin position="1"/>
        <end position="565"/>
    </location>
</feature>
<sequence length="565" mass="63190">MRQSKFFMPTLKEAPSDAVAKSHQLMLRGGYIRQVTAGVYAYLPLGYRVLRKAENIIEEEMNNINVPEMIMPHLLPATLWQESGRYKKYGAEMFKLQDRHGRESLLGPTHEETFTEIVAKNLKSYKQMPLALYQIQTKFRDENRPRFGLLRGREFVMLDGYSFAATREQLDEQFDDQKSAYLKIFNRAGVTVHPVIADSGTMGGKNSTEFQAPAAIGEDTIATNEKGTYAANLEMAKSIDTFKQDPEDAKELTKVATPGMDTIDKLAEFLKVPATRIVKSILYIADDQKVLVLIRGDKEINEVKLGHVLDADEVRTANADELVEITGSEKGGVGPIGADWADKIVADETVKGLYNVVVGANETDYQYQNANLDRDFKVDEFADIRTANEGELDPVDHLPLKFTTSIEVGHIFKLGTYYTKTMGADFLDNNGKAKPVIMGSYGIGVTRMLSAAVEQHLTENGIAWPKEIAPFDVHLIQMKMKDEAQTELAEKLEKELSTKYDVLYDDRNERPGVKFNDADLVGAPLRITIGRKAKDGIVEVKRPTDEKAMEVNISDLDAMITKELG</sequence>